<name>UCP6_SCHPO</name>
<gene>
    <name type="primary">ucp6</name>
    <name type="ORF">SPAC3F10.13</name>
</gene>
<protein>
    <recommendedName>
        <fullName>UBA domain-containing protein 6</fullName>
    </recommendedName>
</protein>
<organism>
    <name type="scientific">Schizosaccharomyces pombe (strain 972 / ATCC 24843)</name>
    <name type="common">Fission yeast</name>
    <dbReference type="NCBI Taxonomy" id="284812"/>
    <lineage>
        <taxon>Eukaryota</taxon>
        <taxon>Fungi</taxon>
        <taxon>Dikarya</taxon>
        <taxon>Ascomycota</taxon>
        <taxon>Taphrinomycotina</taxon>
        <taxon>Schizosaccharomycetes</taxon>
        <taxon>Schizosaccharomycetales</taxon>
        <taxon>Schizosaccharomycetaceae</taxon>
        <taxon>Schizosaccharomyces</taxon>
    </lineage>
</organism>
<sequence length="612" mass="68721">MEDLDTKIKTLKNMGVSESDAKDSLERCGYDVESAAEFIFSGQLEKSRLVPIMSSTSIASSLPSYQDTFFLPSPRKRRRLPGRIGTVLKPSALFPAIAPFLFVVFEIPVALNTFVHATCKGLLFAEDNASFHRPFTDVSAHLSSSSLSKYNHHSNHRLASPGWWYGEDSCISQSLDPRSVMQVQTIRAFEFLFSSHRLYLDTVHITAALSQVLAGLGNTNTSMSDGDCIAAFLSSYFSPPNAEFDSTFCSTLSSLTNSEKPTYIFNFKPNSTPDLRLSIESCLDLLLHPPSSAQKNWSWIKHVGKVFCCSLPGNNASGTPRFLLTPKIDLSKCIIENRDEMLRRYQLETVYRKTLLEWEDLYKRLTGVTLTDKDIGELLTDGQQFLEKRNPALSSHLQLLKETLQTKISTLISNTNATQHKLSTLYRGMQNKCTRRLLAVIIEPSIIYICLKNSAVQSNRNVSPSANHNEQWYLVRFTTSATISQDSPPCIVEPVTFEEVDLEFEKHISYHNRLLIYVDDDCEASTRTVIPTSVKNFIAEDNEYFDDELAGIIHSPTVSTRSSRSSDVSEYDLEDQGGLQLTVPHINTDVQCHRSRNSACEFPESMHVEHSG</sequence>
<proteinExistence type="evidence at protein level"/>
<evidence type="ECO:0000255" key="1">
    <source>
        <dbReference type="PROSITE-ProRule" id="PRU00212"/>
    </source>
</evidence>
<evidence type="ECO:0000269" key="2">
    <source>
    </source>
</evidence>
<evidence type="ECO:0000269" key="3">
    <source>
    </source>
</evidence>
<keyword id="KW-0963">Cytoplasm</keyword>
<keyword id="KW-0539">Nucleus</keyword>
<keyword id="KW-0597">Phosphoprotein</keyword>
<keyword id="KW-1185">Reference proteome</keyword>
<comment type="subcellular location">
    <subcellularLocation>
        <location evidence="2">Cytoplasm</location>
    </subcellularLocation>
    <subcellularLocation>
        <location evidence="2">Nucleus</location>
    </subcellularLocation>
</comment>
<accession>Q10187</accession>
<feature type="chain" id="PRO_0000065715" description="UBA domain-containing protein 6">
    <location>
        <begin position="1"/>
        <end position="612"/>
    </location>
</feature>
<feature type="domain" description="UBA" evidence="1">
    <location>
        <begin position="3"/>
        <end position="42"/>
    </location>
</feature>
<feature type="modified residue" description="Phosphoserine" evidence="3">
    <location>
        <position position="595"/>
    </location>
</feature>
<dbReference type="EMBL" id="CU329670">
    <property type="protein sequence ID" value="CAA93311.1"/>
    <property type="molecule type" value="Genomic_DNA"/>
</dbReference>
<dbReference type="PIR" id="T38714">
    <property type="entry name" value="T38714"/>
</dbReference>
<dbReference type="RefSeq" id="NP_593945.1">
    <property type="nucleotide sequence ID" value="NM_001019373.2"/>
</dbReference>
<dbReference type="SMR" id="Q10187"/>
<dbReference type="BioGRID" id="279478">
    <property type="interactions" value="18"/>
</dbReference>
<dbReference type="STRING" id="284812.Q10187"/>
<dbReference type="iPTMnet" id="Q10187"/>
<dbReference type="PaxDb" id="4896-SPAC3F10.13.1"/>
<dbReference type="EnsemblFungi" id="SPAC3F10.13.1">
    <property type="protein sequence ID" value="SPAC3F10.13.1:pep"/>
    <property type="gene ID" value="SPAC3F10.13"/>
</dbReference>
<dbReference type="GeneID" id="2543043"/>
<dbReference type="KEGG" id="spo:2543043"/>
<dbReference type="PomBase" id="SPAC3F10.13">
    <property type="gene designation" value="ucp6"/>
</dbReference>
<dbReference type="VEuPathDB" id="FungiDB:SPAC3F10.13"/>
<dbReference type="HOGENOM" id="CLU_441570_0_0_1"/>
<dbReference type="InParanoid" id="Q10187"/>
<dbReference type="OMA" id="EDNEYFD"/>
<dbReference type="PRO" id="PR:Q10187"/>
<dbReference type="Proteomes" id="UP000002485">
    <property type="component" value="Chromosome I"/>
</dbReference>
<dbReference type="GO" id="GO:0005829">
    <property type="term" value="C:cytosol"/>
    <property type="evidence" value="ECO:0007005"/>
    <property type="project" value="PomBase"/>
</dbReference>
<dbReference type="GO" id="GO:0005634">
    <property type="term" value="C:nucleus"/>
    <property type="evidence" value="ECO:0007005"/>
    <property type="project" value="PomBase"/>
</dbReference>
<dbReference type="GO" id="GO:0031593">
    <property type="term" value="F:polyubiquitin modification-dependent protein binding"/>
    <property type="evidence" value="ECO:0000304"/>
    <property type="project" value="PomBase"/>
</dbReference>
<dbReference type="GO" id="GO:0043130">
    <property type="term" value="F:ubiquitin binding"/>
    <property type="evidence" value="ECO:0000304"/>
    <property type="project" value="PomBase"/>
</dbReference>
<dbReference type="CDD" id="cd14330">
    <property type="entry name" value="UBA_atDRM2_like"/>
    <property type="match status" value="1"/>
</dbReference>
<dbReference type="Gene3D" id="1.10.8.10">
    <property type="entry name" value="DNA helicase RuvA subunit, C-terminal domain"/>
    <property type="match status" value="1"/>
</dbReference>
<dbReference type="InterPro" id="IPR015940">
    <property type="entry name" value="UBA"/>
</dbReference>
<dbReference type="InterPro" id="IPR009060">
    <property type="entry name" value="UBA-like_sf"/>
</dbReference>
<dbReference type="InterPro" id="IPR055335">
    <property type="entry name" value="Ucp6/RUP1"/>
</dbReference>
<dbReference type="PANTHER" id="PTHR39597">
    <property type="entry name" value="UBA DOMAIN-CONTAINING PROTEIN RUP1"/>
    <property type="match status" value="1"/>
</dbReference>
<dbReference type="PANTHER" id="PTHR39597:SF1">
    <property type="entry name" value="UBA DOMAIN-CONTAINING PROTEIN RUP1"/>
    <property type="match status" value="1"/>
</dbReference>
<dbReference type="Pfam" id="PF00627">
    <property type="entry name" value="UBA"/>
    <property type="match status" value="1"/>
</dbReference>
<dbReference type="SMART" id="SM00165">
    <property type="entry name" value="UBA"/>
    <property type="match status" value="1"/>
</dbReference>
<dbReference type="SUPFAM" id="SSF46934">
    <property type="entry name" value="UBA-like"/>
    <property type="match status" value="1"/>
</dbReference>
<dbReference type="PROSITE" id="PS50030">
    <property type="entry name" value="UBA"/>
    <property type="match status" value="1"/>
</dbReference>
<reference key="1">
    <citation type="journal article" date="2002" name="Nature">
        <title>The genome sequence of Schizosaccharomyces pombe.</title>
        <authorList>
            <person name="Wood V."/>
            <person name="Gwilliam R."/>
            <person name="Rajandream M.A."/>
            <person name="Lyne M.H."/>
            <person name="Lyne R."/>
            <person name="Stewart A."/>
            <person name="Sgouros J.G."/>
            <person name="Peat N."/>
            <person name="Hayles J."/>
            <person name="Baker S.G."/>
            <person name="Basham D."/>
            <person name="Bowman S."/>
            <person name="Brooks K."/>
            <person name="Brown D."/>
            <person name="Brown S."/>
            <person name="Chillingworth T."/>
            <person name="Churcher C.M."/>
            <person name="Collins M."/>
            <person name="Connor R."/>
            <person name="Cronin A."/>
            <person name="Davis P."/>
            <person name="Feltwell T."/>
            <person name="Fraser A."/>
            <person name="Gentles S."/>
            <person name="Goble A."/>
            <person name="Hamlin N."/>
            <person name="Harris D.E."/>
            <person name="Hidalgo J."/>
            <person name="Hodgson G."/>
            <person name="Holroyd S."/>
            <person name="Hornsby T."/>
            <person name="Howarth S."/>
            <person name="Huckle E.J."/>
            <person name="Hunt S."/>
            <person name="Jagels K."/>
            <person name="James K.D."/>
            <person name="Jones L."/>
            <person name="Jones M."/>
            <person name="Leather S."/>
            <person name="McDonald S."/>
            <person name="McLean J."/>
            <person name="Mooney P."/>
            <person name="Moule S."/>
            <person name="Mungall K.L."/>
            <person name="Murphy L.D."/>
            <person name="Niblett D."/>
            <person name="Odell C."/>
            <person name="Oliver K."/>
            <person name="O'Neil S."/>
            <person name="Pearson D."/>
            <person name="Quail M.A."/>
            <person name="Rabbinowitsch E."/>
            <person name="Rutherford K.M."/>
            <person name="Rutter S."/>
            <person name="Saunders D."/>
            <person name="Seeger K."/>
            <person name="Sharp S."/>
            <person name="Skelton J."/>
            <person name="Simmonds M.N."/>
            <person name="Squares R."/>
            <person name="Squares S."/>
            <person name="Stevens K."/>
            <person name="Taylor K."/>
            <person name="Taylor R.G."/>
            <person name="Tivey A."/>
            <person name="Walsh S.V."/>
            <person name="Warren T."/>
            <person name="Whitehead S."/>
            <person name="Woodward J.R."/>
            <person name="Volckaert G."/>
            <person name="Aert R."/>
            <person name="Robben J."/>
            <person name="Grymonprez B."/>
            <person name="Weltjens I."/>
            <person name="Vanstreels E."/>
            <person name="Rieger M."/>
            <person name="Schaefer M."/>
            <person name="Mueller-Auer S."/>
            <person name="Gabel C."/>
            <person name="Fuchs M."/>
            <person name="Duesterhoeft A."/>
            <person name="Fritzc C."/>
            <person name="Holzer E."/>
            <person name="Moestl D."/>
            <person name="Hilbert H."/>
            <person name="Borzym K."/>
            <person name="Langer I."/>
            <person name="Beck A."/>
            <person name="Lehrach H."/>
            <person name="Reinhardt R."/>
            <person name="Pohl T.M."/>
            <person name="Eger P."/>
            <person name="Zimmermann W."/>
            <person name="Wedler H."/>
            <person name="Wambutt R."/>
            <person name="Purnelle B."/>
            <person name="Goffeau A."/>
            <person name="Cadieu E."/>
            <person name="Dreano S."/>
            <person name="Gloux S."/>
            <person name="Lelaure V."/>
            <person name="Mottier S."/>
            <person name="Galibert F."/>
            <person name="Aves S.J."/>
            <person name="Xiang Z."/>
            <person name="Hunt C."/>
            <person name="Moore K."/>
            <person name="Hurst S.M."/>
            <person name="Lucas M."/>
            <person name="Rochet M."/>
            <person name="Gaillardin C."/>
            <person name="Tallada V.A."/>
            <person name="Garzon A."/>
            <person name="Thode G."/>
            <person name="Daga R.R."/>
            <person name="Cruzado L."/>
            <person name="Jimenez J."/>
            <person name="Sanchez M."/>
            <person name="del Rey F."/>
            <person name="Benito J."/>
            <person name="Dominguez A."/>
            <person name="Revuelta J.L."/>
            <person name="Moreno S."/>
            <person name="Armstrong J."/>
            <person name="Forsburg S.L."/>
            <person name="Cerutti L."/>
            <person name="Lowe T."/>
            <person name="McCombie W.R."/>
            <person name="Paulsen I."/>
            <person name="Potashkin J."/>
            <person name="Shpakovski G.V."/>
            <person name="Ussery D."/>
            <person name="Barrell B.G."/>
            <person name="Nurse P."/>
        </authorList>
    </citation>
    <scope>NUCLEOTIDE SEQUENCE [LARGE SCALE GENOMIC DNA]</scope>
    <source>
        <strain>972 / ATCC 24843</strain>
    </source>
</reference>
<reference key="2">
    <citation type="journal article" date="2001" name="Nat. Cell Biol.">
        <title>Proteins containing the UBA domain are able to bind to multi-ubiquitin chains.</title>
        <authorList>
            <person name="Wilkinson C.R.M."/>
            <person name="Seeger M."/>
            <person name="Hartmann-Petersen R."/>
            <person name="Stone M."/>
            <person name="Wallace M."/>
            <person name="Semple C."/>
            <person name="Gordon C."/>
        </authorList>
    </citation>
    <scope>IDENTIFICATION</scope>
</reference>
<reference key="3">
    <citation type="journal article" date="2006" name="Nat. Biotechnol.">
        <title>ORFeome cloning and global analysis of protein localization in the fission yeast Schizosaccharomyces pombe.</title>
        <authorList>
            <person name="Matsuyama A."/>
            <person name="Arai R."/>
            <person name="Yashiroda Y."/>
            <person name="Shirai A."/>
            <person name="Kamata A."/>
            <person name="Sekido S."/>
            <person name="Kobayashi Y."/>
            <person name="Hashimoto A."/>
            <person name="Hamamoto M."/>
            <person name="Hiraoka Y."/>
            <person name="Horinouchi S."/>
            <person name="Yoshida M."/>
        </authorList>
    </citation>
    <scope>SUBCELLULAR LOCATION [LARGE SCALE ANALYSIS]</scope>
</reference>
<reference key="4">
    <citation type="journal article" date="2008" name="J. Proteome Res.">
        <title>Phosphoproteome analysis of fission yeast.</title>
        <authorList>
            <person name="Wilson-Grady J.T."/>
            <person name="Villen J."/>
            <person name="Gygi S.P."/>
        </authorList>
    </citation>
    <scope>PHOSPHORYLATION [LARGE SCALE ANALYSIS] AT SER-595</scope>
    <scope>IDENTIFICATION BY MASS SPECTROMETRY</scope>
</reference>